<dbReference type="EMBL" id="DQ141175">
    <property type="protein sequence ID" value="AAZ83774.1"/>
    <property type="molecule type" value="mRNA"/>
</dbReference>
<dbReference type="SMR" id="Q3YED8"/>
<dbReference type="ConoServer" id="1129">
    <property type="toxin name" value="ViKr92 precursor"/>
</dbReference>
<dbReference type="GO" id="GO:0005576">
    <property type="term" value="C:extracellular region"/>
    <property type="evidence" value="ECO:0007669"/>
    <property type="project" value="UniProtKB-SubCell"/>
</dbReference>
<dbReference type="GO" id="GO:0008200">
    <property type="term" value="F:ion channel inhibitor activity"/>
    <property type="evidence" value="ECO:0007669"/>
    <property type="project" value="InterPro"/>
</dbReference>
<dbReference type="GO" id="GO:0090729">
    <property type="term" value="F:toxin activity"/>
    <property type="evidence" value="ECO:0007669"/>
    <property type="project" value="UniProtKB-KW"/>
</dbReference>
<dbReference type="InterPro" id="IPR004214">
    <property type="entry name" value="Conotoxin"/>
</dbReference>
<dbReference type="Pfam" id="PF02950">
    <property type="entry name" value="Conotoxin"/>
    <property type="match status" value="1"/>
</dbReference>
<dbReference type="SUPFAM" id="SSF57059">
    <property type="entry name" value="omega toxin-like"/>
    <property type="match status" value="1"/>
</dbReference>
<feature type="signal peptide" evidence="2">
    <location>
        <begin position="1"/>
        <end position="22"/>
    </location>
</feature>
<feature type="propeptide" id="PRO_0000315518" evidence="4">
    <location>
        <begin position="23"/>
        <end position="51"/>
    </location>
</feature>
<feature type="peptide" id="PRO_0000315519" description="Conotoxin ViKr92">
    <location>
        <begin position="52"/>
        <end position="81"/>
    </location>
</feature>
<feature type="disulfide bond" evidence="1">
    <location>
        <begin position="53"/>
        <end position="70"/>
    </location>
</feature>
<feature type="disulfide bond" evidence="1">
    <location>
        <begin position="60"/>
        <end position="74"/>
    </location>
</feature>
<feature type="disulfide bond" evidence="1">
    <location>
        <begin position="69"/>
        <end position="78"/>
    </location>
</feature>
<sequence length="81" mass="9148">MKLTWMMIVAVLFLTAWTFVTADDTRYKLENPFLKARNELQKLEASQLNERGCLDPGYFCGTPFLGAYCCGGICLIVCIET</sequence>
<evidence type="ECO:0000250" key="1"/>
<evidence type="ECO:0000255" key="2"/>
<evidence type="ECO:0000303" key="3">
    <source>
    </source>
</evidence>
<evidence type="ECO:0000305" key="4"/>
<evidence type="ECO:0000305" key="5">
    <source>
    </source>
</evidence>
<reference key="1">
    <citation type="journal article" date="2006" name="Peptides">
        <title>Sequence diversity of O-superfamily conopeptides from Conus marmoreus native to Hainan.</title>
        <authorList>
            <person name="Luo S."/>
            <person name="Zhangsun D."/>
            <person name="Lin Q."/>
            <person name="Xie L."/>
            <person name="Wu Y."/>
            <person name="Zhu X."/>
        </authorList>
    </citation>
    <scope>NUCLEOTIDE SEQUENCE [MRNA]</scope>
    <source>
        <tissue>Venom duct</tissue>
    </source>
</reference>
<proteinExistence type="inferred from homology"/>
<keyword id="KW-1015">Disulfide bond</keyword>
<keyword id="KW-0960">Knottin</keyword>
<keyword id="KW-0528">Neurotoxin</keyword>
<keyword id="KW-0964">Secreted</keyword>
<keyword id="KW-0732">Signal</keyword>
<keyword id="KW-0800">Toxin</keyword>
<comment type="subcellular location">
    <subcellularLocation>
        <location evidence="5">Secreted</location>
    </subcellularLocation>
</comment>
<comment type="tissue specificity">
    <text evidence="5">Expressed by the venom duct.</text>
</comment>
<comment type="domain">
    <text evidence="1">The presence of a 'disulfide through disulfide knot' structurally defines this protein as a knottin.</text>
</comment>
<comment type="domain">
    <text>The cysteine framework is VI/VII (C-C-CC-C-C).</text>
</comment>
<comment type="similarity">
    <text evidence="4">Belongs to the conotoxin O1 superfamily.</text>
</comment>
<protein>
    <recommendedName>
        <fullName evidence="3">Conotoxin ViKr92</fullName>
    </recommendedName>
</protein>
<name>O16K_CONVR</name>
<organism>
    <name type="scientific">Conus virgo</name>
    <name type="common">Virgin cone</name>
    <dbReference type="NCBI Taxonomy" id="89427"/>
    <lineage>
        <taxon>Eukaryota</taxon>
        <taxon>Metazoa</taxon>
        <taxon>Spiralia</taxon>
        <taxon>Lophotrochozoa</taxon>
        <taxon>Mollusca</taxon>
        <taxon>Gastropoda</taxon>
        <taxon>Caenogastropoda</taxon>
        <taxon>Neogastropoda</taxon>
        <taxon>Conoidea</taxon>
        <taxon>Conidae</taxon>
        <taxon>Conus</taxon>
        <taxon>Virgiconus</taxon>
    </lineage>
</organism>
<accession>Q3YED8</accession>